<evidence type="ECO:0000250" key="1"/>
<evidence type="ECO:0000255" key="2"/>
<evidence type="ECO:0000255" key="3">
    <source>
        <dbReference type="PROSITE-ProRule" id="PRU00175"/>
    </source>
</evidence>
<evidence type="ECO:0000255" key="4">
    <source>
        <dbReference type="PROSITE-ProRule" id="PRU00358"/>
    </source>
</evidence>
<evidence type="ECO:0000256" key="5">
    <source>
        <dbReference type="SAM" id="MobiDB-lite"/>
    </source>
</evidence>
<evidence type="ECO:0000305" key="6"/>
<reference key="1">
    <citation type="journal article" date="2000" name="Nature">
        <title>Sequence and analysis of chromosome 1 of the plant Arabidopsis thaliana.</title>
        <authorList>
            <person name="Theologis A."/>
            <person name="Ecker J.R."/>
            <person name="Palm C.J."/>
            <person name="Federspiel N.A."/>
            <person name="Kaul S."/>
            <person name="White O."/>
            <person name="Alonso J."/>
            <person name="Altafi H."/>
            <person name="Araujo R."/>
            <person name="Bowman C.L."/>
            <person name="Brooks S.Y."/>
            <person name="Buehler E."/>
            <person name="Chan A."/>
            <person name="Chao Q."/>
            <person name="Chen H."/>
            <person name="Cheuk R.F."/>
            <person name="Chin C.W."/>
            <person name="Chung M.K."/>
            <person name="Conn L."/>
            <person name="Conway A.B."/>
            <person name="Conway A.R."/>
            <person name="Creasy T.H."/>
            <person name="Dewar K."/>
            <person name="Dunn P."/>
            <person name="Etgu P."/>
            <person name="Feldblyum T.V."/>
            <person name="Feng J.-D."/>
            <person name="Fong B."/>
            <person name="Fujii C.Y."/>
            <person name="Gill J.E."/>
            <person name="Goldsmith A.D."/>
            <person name="Haas B."/>
            <person name="Hansen N.F."/>
            <person name="Hughes B."/>
            <person name="Huizar L."/>
            <person name="Hunter J.L."/>
            <person name="Jenkins J."/>
            <person name="Johnson-Hopson C."/>
            <person name="Khan S."/>
            <person name="Khaykin E."/>
            <person name="Kim C.J."/>
            <person name="Koo H.L."/>
            <person name="Kremenetskaia I."/>
            <person name="Kurtz D.B."/>
            <person name="Kwan A."/>
            <person name="Lam B."/>
            <person name="Langin-Hooper S."/>
            <person name="Lee A."/>
            <person name="Lee J.M."/>
            <person name="Lenz C.A."/>
            <person name="Li J.H."/>
            <person name="Li Y.-P."/>
            <person name="Lin X."/>
            <person name="Liu S.X."/>
            <person name="Liu Z.A."/>
            <person name="Luros J.S."/>
            <person name="Maiti R."/>
            <person name="Marziali A."/>
            <person name="Militscher J."/>
            <person name="Miranda M."/>
            <person name="Nguyen M."/>
            <person name="Nierman W.C."/>
            <person name="Osborne B.I."/>
            <person name="Pai G."/>
            <person name="Peterson J."/>
            <person name="Pham P.K."/>
            <person name="Rizzo M."/>
            <person name="Rooney T."/>
            <person name="Rowley D."/>
            <person name="Sakano H."/>
            <person name="Salzberg S.L."/>
            <person name="Schwartz J.R."/>
            <person name="Shinn P."/>
            <person name="Southwick A.M."/>
            <person name="Sun H."/>
            <person name="Tallon L.J."/>
            <person name="Tambunga G."/>
            <person name="Toriumi M.J."/>
            <person name="Town C.D."/>
            <person name="Utterback T."/>
            <person name="Van Aken S."/>
            <person name="Vaysberg M."/>
            <person name="Vysotskaia V.S."/>
            <person name="Walker M."/>
            <person name="Wu D."/>
            <person name="Yu G."/>
            <person name="Fraser C.M."/>
            <person name="Venter J.C."/>
            <person name="Davis R.W."/>
        </authorList>
    </citation>
    <scope>NUCLEOTIDE SEQUENCE [LARGE SCALE GENOMIC DNA]</scope>
    <source>
        <strain>cv. Columbia</strain>
    </source>
</reference>
<reference key="2">
    <citation type="journal article" date="2017" name="Plant J.">
        <title>Araport11: a complete reannotation of the Arabidopsis thaliana reference genome.</title>
        <authorList>
            <person name="Cheng C.Y."/>
            <person name="Krishnakumar V."/>
            <person name="Chan A.P."/>
            <person name="Thibaud-Nissen F."/>
            <person name="Schobel S."/>
            <person name="Town C.D."/>
        </authorList>
    </citation>
    <scope>GENOME REANNOTATION</scope>
    <source>
        <strain>cv. Columbia</strain>
    </source>
</reference>
<reference key="3">
    <citation type="journal article" date="2002" name="Genome Biol.">
        <title>Evaluation and classification of RING-finger domains encoded by the Arabidopsis genome.</title>
        <authorList>
            <person name="Kosarev P."/>
            <person name="Mayer K.F.X."/>
            <person name="Hardtke C.S."/>
        </authorList>
    </citation>
    <scope>GENE FAMILY ORGANIZATION</scope>
</reference>
<reference key="4">
    <citation type="journal article" date="2008" name="Plant J.">
        <title>ORTH/VIM proteins that regulate DNA methylation are functional ubiquitin E3 ligases.</title>
        <authorList>
            <person name="Kraft E."/>
            <person name="Bostick M."/>
            <person name="Jacobsen S.E."/>
            <person name="Callis J."/>
        </authorList>
    </citation>
    <scope>GENE FAMILY</scope>
    <scope>NOMENCLATURE</scope>
</reference>
<organism>
    <name type="scientific">Arabidopsis thaliana</name>
    <name type="common">Mouse-ear cress</name>
    <dbReference type="NCBI Taxonomy" id="3702"/>
    <lineage>
        <taxon>Eukaryota</taxon>
        <taxon>Viridiplantae</taxon>
        <taxon>Streptophyta</taxon>
        <taxon>Embryophyta</taxon>
        <taxon>Tracheophyta</taxon>
        <taxon>Spermatophyta</taxon>
        <taxon>Magnoliopsida</taxon>
        <taxon>eudicotyledons</taxon>
        <taxon>Gunneridae</taxon>
        <taxon>Pentapetalae</taxon>
        <taxon>rosids</taxon>
        <taxon>malvids</taxon>
        <taxon>Brassicales</taxon>
        <taxon>Brassicaceae</taxon>
        <taxon>Camelineae</taxon>
        <taxon>Arabidopsis</taxon>
    </lineage>
</organism>
<dbReference type="EC" id="2.3.2.27"/>
<dbReference type="EMBL" id="AC079732">
    <property type="protein sequence ID" value="AAG29230.1"/>
    <property type="status" value="ALT_SEQ"/>
    <property type="molecule type" value="Genomic_DNA"/>
</dbReference>
<dbReference type="EMBL" id="CP002684">
    <property type="protein sequence ID" value="AEE33468.1"/>
    <property type="molecule type" value="Genomic_DNA"/>
</dbReference>
<dbReference type="PIR" id="D96612">
    <property type="entry name" value="D96612"/>
</dbReference>
<dbReference type="RefSeq" id="NP_176091.2">
    <property type="nucleotide sequence ID" value="NM_104575.3"/>
</dbReference>
<dbReference type="SMR" id="Q9FVS2"/>
<dbReference type="FunCoup" id="Q9FVS2">
    <property type="interactions" value="1789"/>
</dbReference>
<dbReference type="STRING" id="3702.Q9FVS2"/>
<dbReference type="PaxDb" id="3702-AT1G57800.1"/>
<dbReference type="ProteomicsDB" id="248909"/>
<dbReference type="EnsemblPlants" id="AT1G57800.1">
    <property type="protein sequence ID" value="AT1G57800.1"/>
    <property type="gene ID" value="AT1G57800"/>
</dbReference>
<dbReference type="GeneID" id="842155"/>
<dbReference type="Gramene" id="AT1G57800.1">
    <property type="protein sequence ID" value="AT1G57800.1"/>
    <property type="gene ID" value="AT1G57800"/>
</dbReference>
<dbReference type="KEGG" id="ath:AT1G57800"/>
<dbReference type="Araport" id="AT1G57800"/>
<dbReference type="TAIR" id="AT1G57800">
    <property type="gene designation" value="VIM5"/>
</dbReference>
<dbReference type="eggNOG" id="ENOG502QRDQ">
    <property type="taxonomic scope" value="Eukaryota"/>
</dbReference>
<dbReference type="HOGENOM" id="CLU_016281_0_0_1"/>
<dbReference type="InParanoid" id="Q9FVS2"/>
<dbReference type="OMA" id="QTEDCTF"/>
<dbReference type="PhylomeDB" id="Q9FVS2"/>
<dbReference type="UniPathway" id="UPA00143"/>
<dbReference type="PRO" id="PR:Q9FVS2"/>
<dbReference type="Proteomes" id="UP000006548">
    <property type="component" value="Chromosome 1"/>
</dbReference>
<dbReference type="ExpressionAtlas" id="Q9FVS2">
    <property type="expression patterns" value="baseline and differential"/>
</dbReference>
<dbReference type="GO" id="GO:0005634">
    <property type="term" value="C:nucleus"/>
    <property type="evidence" value="ECO:0000250"/>
    <property type="project" value="UniProtKB"/>
</dbReference>
<dbReference type="GO" id="GO:0042393">
    <property type="term" value="F:histone binding"/>
    <property type="evidence" value="ECO:0000250"/>
    <property type="project" value="UniProtKB"/>
</dbReference>
<dbReference type="GO" id="GO:0008327">
    <property type="term" value="F:methyl-CpG binding"/>
    <property type="evidence" value="ECO:0000250"/>
    <property type="project" value="UniProtKB"/>
</dbReference>
<dbReference type="GO" id="GO:0010428">
    <property type="term" value="F:methyl-CpNpG binding"/>
    <property type="evidence" value="ECO:0000250"/>
    <property type="project" value="UniProtKB"/>
</dbReference>
<dbReference type="GO" id="GO:0010429">
    <property type="term" value="F:methyl-CpNpN binding"/>
    <property type="evidence" value="ECO:0000250"/>
    <property type="project" value="UniProtKB"/>
</dbReference>
<dbReference type="GO" id="GO:0004842">
    <property type="term" value="F:ubiquitin-protein transferase activity"/>
    <property type="evidence" value="ECO:0000250"/>
    <property type="project" value="UniProtKB"/>
</dbReference>
<dbReference type="GO" id="GO:0008270">
    <property type="term" value="F:zinc ion binding"/>
    <property type="evidence" value="ECO:0007669"/>
    <property type="project" value="UniProtKB-KW"/>
</dbReference>
<dbReference type="GO" id="GO:0006325">
    <property type="term" value="P:chromatin organization"/>
    <property type="evidence" value="ECO:0007669"/>
    <property type="project" value="UniProtKB-KW"/>
</dbReference>
<dbReference type="GO" id="GO:0016567">
    <property type="term" value="P:protein ubiquitination"/>
    <property type="evidence" value="ECO:0000250"/>
    <property type="project" value="UniProtKB"/>
</dbReference>
<dbReference type="CDD" id="cd23139">
    <property type="entry name" value="RING-HC_ORTHRUS_rpt2"/>
    <property type="match status" value="1"/>
</dbReference>
<dbReference type="FunFam" id="2.30.280.10:FF:000002">
    <property type="entry name" value="E3 ubiquitin-protein ligase ORTHRUS 2"/>
    <property type="match status" value="1"/>
</dbReference>
<dbReference type="FunFam" id="3.30.40.10:FF:000737">
    <property type="entry name" value="E3 ubiquitin-protein ligase ORTHRUS 3"/>
    <property type="match status" value="1"/>
</dbReference>
<dbReference type="Gene3D" id="2.30.280.10">
    <property type="entry name" value="SRA-YDG"/>
    <property type="match status" value="1"/>
</dbReference>
<dbReference type="Gene3D" id="3.30.40.10">
    <property type="entry name" value="Zinc/RING finger domain, C3HC4 (zinc finger)"/>
    <property type="match status" value="3"/>
</dbReference>
<dbReference type="InterPro" id="IPR015947">
    <property type="entry name" value="PUA-like_sf"/>
</dbReference>
<dbReference type="InterPro" id="IPR047529">
    <property type="entry name" value="RING-HC_ORTHRUS_rpt2"/>
</dbReference>
<dbReference type="InterPro" id="IPR036987">
    <property type="entry name" value="SRA-YDG_sf"/>
</dbReference>
<dbReference type="InterPro" id="IPR003105">
    <property type="entry name" value="SRA_YDG"/>
</dbReference>
<dbReference type="InterPro" id="IPR045134">
    <property type="entry name" value="UHRF1/2-like"/>
</dbReference>
<dbReference type="InterPro" id="IPR019786">
    <property type="entry name" value="Zinc_finger_PHD-type_CS"/>
</dbReference>
<dbReference type="InterPro" id="IPR027370">
    <property type="entry name" value="Znf-RING_euk"/>
</dbReference>
<dbReference type="InterPro" id="IPR018957">
    <property type="entry name" value="Znf_C3HC4_RING-type"/>
</dbReference>
<dbReference type="InterPro" id="IPR011011">
    <property type="entry name" value="Znf_FYVE_PHD"/>
</dbReference>
<dbReference type="InterPro" id="IPR001965">
    <property type="entry name" value="Znf_PHD"/>
</dbReference>
<dbReference type="InterPro" id="IPR001841">
    <property type="entry name" value="Znf_RING"/>
</dbReference>
<dbReference type="InterPro" id="IPR013083">
    <property type="entry name" value="Znf_RING/FYVE/PHD"/>
</dbReference>
<dbReference type="InterPro" id="IPR017907">
    <property type="entry name" value="Znf_RING_CS"/>
</dbReference>
<dbReference type="PANTHER" id="PTHR14140:SF46">
    <property type="entry name" value="E3 UBIQUITIN-PROTEIN LIGASE ORTHRUS 1-RELATED"/>
    <property type="match status" value="1"/>
</dbReference>
<dbReference type="PANTHER" id="PTHR14140">
    <property type="entry name" value="E3 UBIQUITIN-PROTEIN LIGASE UHRF-RELATED"/>
    <property type="match status" value="1"/>
</dbReference>
<dbReference type="Pfam" id="PF02182">
    <property type="entry name" value="SAD_SRA"/>
    <property type="match status" value="1"/>
</dbReference>
<dbReference type="Pfam" id="PF00097">
    <property type="entry name" value="zf-C3HC4"/>
    <property type="match status" value="1"/>
</dbReference>
<dbReference type="Pfam" id="PF13445">
    <property type="entry name" value="zf-RING_UBOX"/>
    <property type="match status" value="1"/>
</dbReference>
<dbReference type="SMART" id="SM00249">
    <property type="entry name" value="PHD"/>
    <property type="match status" value="1"/>
</dbReference>
<dbReference type="SMART" id="SM00184">
    <property type="entry name" value="RING"/>
    <property type="match status" value="2"/>
</dbReference>
<dbReference type="SMART" id="SM00466">
    <property type="entry name" value="SRA"/>
    <property type="match status" value="1"/>
</dbReference>
<dbReference type="SUPFAM" id="SSF57903">
    <property type="entry name" value="FYVE/PHD zinc finger"/>
    <property type="match status" value="1"/>
</dbReference>
<dbReference type="SUPFAM" id="SSF88697">
    <property type="entry name" value="PUA domain-like"/>
    <property type="match status" value="1"/>
</dbReference>
<dbReference type="SUPFAM" id="SSF57850">
    <property type="entry name" value="RING/U-box"/>
    <property type="match status" value="2"/>
</dbReference>
<dbReference type="PROSITE" id="PS51015">
    <property type="entry name" value="YDG"/>
    <property type="match status" value="1"/>
</dbReference>
<dbReference type="PROSITE" id="PS01359">
    <property type="entry name" value="ZF_PHD_1"/>
    <property type="match status" value="1"/>
</dbReference>
<dbReference type="PROSITE" id="PS00518">
    <property type="entry name" value="ZF_RING_1"/>
    <property type="match status" value="1"/>
</dbReference>
<dbReference type="PROSITE" id="PS50089">
    <property type="entry name" value="ZF_RING_2"/>
    <property type="match status" value="2"/>
</dbReference>
<sequence length="660" mass="73364">MTPATQYPCDPEGVCMRCKSMPPPEESLTCGTCVTPWHVSCLLSPPETLSATLQWLCPDCSGETNPLPVSGVAAGYGSVGSDLVAAIHSIEADETLSAEEKAKKKQQLLSGKGVVDEDDEEEKKKTSKGKKPIDVLSHFECSFCMQSLQKPVSVRVLFALALMLVWFLESTPCGHNACLKCFLKWMGQGHRSCGTCRSVIPESMVTNPRINLSIVSAIRLARVSEKADARTSKVVHYVDNEDRPDKAFTTERAKKTGNANASSGKIFVTIPRDHFGPIPAENDPVRNQGLLVGESWKGRLACRQWGAHFPHVSGIAGQASYGAQSVVLAGGYDDDEDHGEWFLYTGSGGRILKGNKRTNTVQAFDQVFLNFNEALRLSCKLGYPVRVVRSTKDKRSPYAPQGGLLRYDGVYRIEKCWRIVGIQMCRFLFVRCDNEPAPWTSDEHGDRPRPLPNVPELNMATDLFERKESPSWDFDEGEDRWRWMKPPPASKKAVKNVLDPEERKLLREAIKSANPNTMRARLLKEFKCQICQKVMTNPVTTPCAHNFCKACLESKFAGTALVRERGSGGRKLRSQKSVMKCPCCPTDIAEFVQNPQVNREVAEVIEKLKKQEEEENAKSLDEGQCSGTSHEEEDDEQPKKRIKLDTDAEVSATVVESDMK</sequence>
<protein>
    <recommendedName>
        <fullName>E3 ubiquitin-protein ligase ORTHRUS 3</fullName>
        <ecNumber>2.3.2.27</ecNumber>
    </recommendedName>
    <alternativeName>
        <fullName>Protein VARIANT IN METHYLATION 5</fullName>
    </alternativeName>
    <alternativeName>
        <fullName evidence="6">RING-type E3 ubiquitin transferase ORTHRUS 3</fullName>
    </alternativeName>
</protein>
<keyword id="KW-0156">Chromatin regulator</keyword>
<keyword id="KW-0175">Coiled coil</keyword>
<keyword id="KW-0238">DNA-binding</keyword>
<keyword id="KW-0479">Metal-binding</keyword>
<keyword id="KW-0539">Nucleus</keyword>
<keyword id="KW-1185">Reference proteome</keyword>
<keyword id="KW-0677">Repeat</keyword>
<keyword id="KW-0808">Transferase</keyword>
<keyword id="KW-0833">Ubl conjugation pathway</keyword>
<keyword id="KW-0862">Zinc</keyword>
<keyword id="KW-0863">Zinc-finger</keyword>
<accession>Q9FVS2</accession>
<feature type="chain" id="PRO_0000396827" description="E3 ubiquitin-protein ligase ORTHRUS 3">
    <location>
        <begin position="1"/>
        <end position="660"/>
    </location>
</feature>
<feature type="domain" description="YDG" evidence="4">
    <location>
        <begin position="285"/>
        <end position="434"/>
    </location>
</feature>
<feature type="zinc finger region" description="PHD-type">
    <location>
        <begin position="12"/>
        <end position="63"/>
    </location>
</feature>
<feature type="zinc finger region" description="RING-type 1" evidence="3">
    <location>
        <begin position="141"/>
        <end position="197"/>
    </location>
</feature>
<feature type="zinc finger region" description="RING-type 2" evidence="3">
    <location>
        <begin position="528"/>
        <end position="585"/>
    </location>
</feature>
<feature type="region of interest" description="Disordered" evidence="5">
    <location>
        <begin position="107"/>
        <end position="129"/>
    </location>
</feature>
<feature type="region of interest" description="Disordered" evidence="5">
    <location>
        <begin position="610"/>
        <end position="660"/>
    </location>
</feature>
<feature type="coiled-coil region" evidence="2">
    <location>
        <begin position="593"/>
        <end position="622"/>
    </location>
</feature>
<feature type="compositionally biased region" description="Basic and acidic residues" evidence="5">
    <location>
        <begin position="610"/>
        <end position="621"/>
    </location>
</feature>
<feature type="compositionally biased region" description="Basic and acidic residues" evidence="5">
    <location>
        <begin position="637"/>
        <end position="646"/>
    </location>
</feature>
<name>ORTH3_ARATH</name>
<proteinExistence type="inferred from homology"/>
<comment type="function">
    <text evidence="1">E3 ubiquitin-protein ligase. May participate in CpG methylation-dependent transcriptional regulation (By similarity).</text>
</comment>
<comment type="catalytic activity">
    <reaction>
        <text>S-ubiquitinyl-[E2 ubiquitin-conjugating enzyme]-L-cysteine + [acceptor protein]-L-lysine = [E2 ubiquitin-conjugating enzyme]-L-cysteine + N(6)-ubiquitinyl-[acceptor protein]-L-lysine.</text>
        <dbReference type="EC" id="2.3.2.27"/>
    </reaction>
</comment>
<comment type="pathway">
    <text>Protein modification; protein ubiquitination.</text>
</comment>
<comment type="subcellular location">
    <subcellularLocation>
        <location evidence="4">Nucleus</location>
    </subcellularLocation>
</comment>
<comment type="domain">
    <text evidence="1">The RING fingers are required for ubiquitin ligase activity.</text>
</comment>
<comment type="domain">
    <text evidence="1">The YDG domain mediates the interaction with histone H3.</text>
</comment>
<comment type="sequence caution" evidence="6">
    <conflict type="erroneous gene model prediction">
        <sequence resource="EMBL-CDS" id="AAG29230"/>
    </conflict>
</comment>
<gene>
    <name type="primary">ORTH3</name>
    <name type="synonym">VIM5</name>
    <name type="ordered locus">At1g57800</name>
    <name type="ORF">F12K22.15</name>
</gene>